<protein>
    <recommendedName>
        <fullName evidence="1">Large ribosomal subunit protein bL12</fullName>
    </recommendedName>
    <alternativeName>
        <fullName evidence="2">50S ribosomal protein L7/L12</fullName>
    </alternativeName>
</protein>
<reference key="1">
    <citation type="journal article" date="2007" name="Genome Res.">
        <title>Genome sequence of a proteolytic (Group I) Clostridium botulinum strain Hall A and comparative analysis of the clostridial genomes.</title>
        <authorList>
            <person name="Sebaihia M."/>
            <person name="Peck M.W."/>
            <person name="Minton N.P."/>
            <person name="Thomson N.R."/>
            <person name="Holden M.T.G."/>
            <person name="Mitchell W.J."/>
            <person name="Carter A.T."/>
            <person name="Bentley S.D."/>
            <person name="Mason D.R."/>
            <person name="Crossman L."/>
            <person name="Paul C.J."/>
            <person name="Ivens A."/>
            <person name="Wells-Bennik M.H.J."/>
            <person name="Davis I.J."/>
            <person name="Cerdeno-Tarraga A.M."/>
            <person name="Churcher C."/>
            <person name="Quail M.A."/>
            <person name="Chillingworth T."/>
            <person name="Feltwell T."/>
            <person name="Fraser A."/>
            <person name="Goodhead I."/>
            <person name="Hance Z."/>
            <person name="Jagels K."/>
            <person name="Larke N."/>
            <person name="Maddison M."/>
            <person name="Moule S."/>
            <person name="Mungall K."/>
            <person name="Norbertczak H."/>
            <person name="Rabbinowitsch E."/>
            <person name="Sanders M."/>
            <person name="Simmonds M."/>
            <person name="White B."/>
            <person name="Whithead S."/>
            <person name="Parkhill J."/>
        </authorList>
    </citation>
    <scope>NUCLEOTIDE SEQUENCE [LARGE SCALE GENOMIC DNA]</scope>
    <source>
        <strain>Hall / ATCC 3502 / NCTC 13319 / Type A</strain>
    </source>
</reference>
<reference key="2">
    <citation type="journal article" date="2007" name="PLoS ONE">
        <title>Analysis of the neurotoxin complex genes in Clostridium botulinum A1-A4 and B1 strains: BoNT/A3, /Ba4 and /B1 clusters are located within plasmids.</title>
        <authorList>
            <person name="Smith T.J."/>
            <person name="Hill K.K."/>
            <person name="Foley B.T."/>
            <person name="Detter J.C."/>
            <person name="Munk A.C."/>
            <person name="Bruce D.C."/>
            <person name="Doggett N.A."/>
            <person name="Smith L.A."/>
            <person name="Marks J.D."/>
            <person name="Xie G."/>
            <person name="Brettin T.S."/>
        </authorList>
    </citation>
    <scope>NUCLEOTIDE SEQUENCE [LARGE SCALE GENOMIC DNA]</scope>
    <source>
        <strain>Hall / ATCC 3502 / NCTC 13319 / Type A</strain>
    </source>
</reference>
<organism>
    <name type="scientific">Clostridium botulinum (strain Hall / ATCC 3502 / NCTC 13319 / Type A)</name>
    <dbReference type="NCBI Taxonomy" id="441771"/>
    <lineage>
        <taxon>Bacteria</taxon>
        <taxon>Bacillati</taxon>
        <taxon>Bacillota</taxon>
        <taxon>Clostridia</taxon>
        <taxon>Eubacteriales</taxon>
        <taxon>Clostridiaceae</taxon>
        <taxon>Clostridium</taxon>
    </lineage>
</organism>
<evidence type="ECO:0000255" key="1">
    <source>
        <dbReference type="HAMAP-Rule" id="MF_00368"/>
    </source>
</evidence>
<evidence type="ECO:0000305" key="2"/>
<proteinExistence type="inferred from homology"/>
<keyword id="KW-1185">Reference proteome</keyword>
<keyword id="KW-0687">Ribonucleoprotein</keyword>
<keyword id="KW-0689">Ribosomal protein</keyword>
<gene>
    <name evidence="1" type="primary">rplL</name>
    <name type="ordered locus">CBO3489</name>
    <name type="ordered locus">CLC_3434</name>
</gene>
<comment type="function">
    <text evidence="1">Forms part of the ribosomal stalk which helps the ribosome interact with GTP-bound translation factors. Is thus essential for accurate translation.</text>
</comment>
<comment type="subunit">
    <text evidence="1">Homodimer. Part of the ribosomal stalk of the 50S ribosomal subunit. Forms a multimeric L10(L12)X complex, where L10 forms an elongated spine to which 2 to 4 L12 dimers bind in a sequential fashion. Binds GTP-bound translation factors.</text>
</comment>
<comment type="similarity">
    <text evidence="1">Belongs to the bacterial ribosomal protein bL12 family.</text>
</comment>
<accession>A5I7L5</accession>
<accession>A7G8U7</accession>
<feature type="chain" id="PRO_1000006989" description="Large ribosomal subunit protein bL12">
    <location>
        <begin position="1"/>
        <end position="123"/>
    </location>
</feature>
<sequence>MKKEEIIQAIKEMTVLELNELVEACEEEFGVSAAAPVAVAGAGAAAGAGAAEEKTEFDVVLADAGSEKIKVIKAVREVTGLGLKEAKALVDGAPKTLKEAASKEDGEAIKAKLEEVGAKVELK</sequence>
<dbReference type="EMBL" id="CP000727">
    <property type="protein sequence ID" value="ABS35898.1"/>
    <property type="molecule type" value="Genomic_DNA"/>
</dbReference>
<dbReference type="EMBL" id="AM412317">
    <property type="protein sequence ID" value="CAL85050.1"/>
    <property type="molecule type" value="Genomic_DNA"/>
</dbReference>
<dbReference type="RefSeq" id="WP_003357259.1">
    <property type="nucleotide sequence ID" value="NC_009698.1"/>
</dbReference>
<dbReference type="RefSeq" id="YP_001255971.1">
    <property type="nucleotide sequence ID" value="NC_009495.1"/>
</dbReference>
<dbReference type="RefSeq" id="YP_001389212.1">
    <property type="nucleotide sequence ID" value="NC_009698.1"/>
</dbReference>
<dbReference type="SMR" id="A5I7L5"/>
<dbReference type="GeneID" id="92940259"/>
<dbReference type="KEGG" id="cbh:CLC_3434"/>
<dbReference type="KEGG" id="cbo:CBO3489"/>
<dbReference type="PATRIC" id="fig|413999.7.peg.3466"/>
<dbReference type="HOGENOM" id="CLU_086499_3_2_9"/>
<dbReference type="PRO" id="PR:A5I7L5"/>
<dbReference type="Proteomes" id="UP000001986">
    <property type="component" value="Chromosome"/>
</dbReference>
<dbReference type="GO" id="GO:0022625">
    <property type="term" value="C:cytosolic large ribosomal subunit"/>
    <property type="evidence" value="ECO:0000318"/>
    <property type="project" value="GO_Central"/>
</dbReference>
<dbReference type="GO" id="GO:0003729">
    <property type="term" value="F:mRNA binding"/>
    <property type="evidence" value="ECO:0000318"/>
    <property type="project" value="GO_Central"/>
</dbReference>
<dbReference type="GO" id="GO:0003735">
    <property type="term" value="F:structural constituent of ribosome"/>
    <property type="evidence" value="ECO:0000318"/>
    <property type="project" value="GO_Central"/>
</dbReference>
<dbReference type="GO" id="GO:0006412">
    <property type="term" value="P:translation"/>
    <property type="evidence" value="ECO:0000318"/>
    <property type="project" value="GO_Central"/>
</dbReference>
<dbReference type="CDD" id="cd00387">
    <property type="entry name" value="Ribosomal_L7_L12"/>
    <property type="match status" value="1"/>
</dbReference>
<dbReference type="FunFam" id="1.20.5.710:FF:000002">
    <property type="entry name" value="50S ribosomal protein L7/L12"/>
    <property type="match status" value="1"/>
</dbReference>
<dbReference type="FunFam" id="3.30.1390.10:FF:000001">
    <property type="entry name" value="50S ribosomal protein L7/L12"/>
    <property type="match status" value="1"/>
</dbReference>
<dbReference type="Gene3D" id="3.30.1390.10">
    <property type="match status" value="1"/>
</dbReference>
<dbReference type="Gene3D" id="1.20.5.710">
    <property type="entry name" value="Single helix bin"/>
    <property type="match status" value="1"/>
</dbReference>
<dbReference type="HAMAP" id="MF_00368">
    <property type="entry name" value="Ribosomal_bL12"/>
    <property type="match status" value="1"/>
</dbReference>
<dbReference type="InterPro" id="IPR000206">
    <property type="entry name" value="Ribosomal_bL12"/>
</dbReference>
<dbReference type="InterPro" id="IPR013823">
    <property type="entry name" value="Ribosomal_bL12_C"/>
</dbReference>
<dbReference type="InterPro" id="IPR014719">
    <property type="entry name" value="Ribosomal_bL12_C/ClpS-like"/>
</dbReference>
<dbReference type="InterPro" id="IPR008932">
    <property type="entry name" value="Ribosomal_bL12_oligo"/>
</dbReference>
<dbReference type="InterPro" id="IPR036235">
    <property type="entry name" value="Ribosomal_bL12_oligo_N_sf"/>
</dbReference>
<dbReference type="NCBIfam" id="TIGR00855">
    <property type="entry name" value="L12"/>
    <property type="match status" value="1"/>
</dbReference>
<dbReference type="PANTHER" id="PTHR45987">
    <property type="entry name" value="39S RIBOSOMAL PROTEIN L12"/>
    <property type="match status" value="1"/>
</dbReference>
<dbReference type="PANTHER" id="PTHR45987:SF4">
    <property type="entry name" value="LARGE RIBOSOMAL SUBUNIT PROTEIN BL12M"/>
    <property type="match status" value="1"/>
</dbReference>
<dbReference type="Pfam" id="PF00542">
    <property type="entry name" value="Ribosomal_L12"/>
    <property type="match status" value="1"/>
</dbReference>
<dbReference type="Pfam" id="PF16320">
    <property type="entry name" value="Ribosomal_L12_N"/>
    <property type="match status" value="1"/>
</dbReference>
<dbReference type="SUPFAM" id="SSF54736">
    <property type="entry name" value="ClpS-like"/>
    <property type="match status" value="1"/>
</dbReference>
<dbReference type="SUPFAM" id="SSF48300">
    <property type="entry name" value="Ribosomal protein L7/12, oligomerisation (N-terminal) domain"/>
    <property type="match status" value="1"/>
</dbReference>
<name>RL7_CLOBH</name>